<protein>
    <recommendedName>
        <fullName evidence="1">Acetylglutamate kinase</fullName>
        <ecNumber evidence="1">2.7.2.8</ecNumber>
    </recommendedName>
    <alternativeName>
        <fullName evidence="1">N-acetyl-L-glutamate 5-phosphotransferase</fullName>
    </alternativeName>
    <alternativeName>
        <fullName evidence="1">NAG kinase</fullName>
        <shortName evidence="1">NAGK</shortName>
    </alternativeName>
</protein>
<comment type="function">
    <text evidence="1">Catalyzes the ATP-dependent phosphorylation of N-acetyl-L-glutamate.</text>
</comment>
<comment type="catalytic activity">
    <reaction evidence="1">
        <text>N-acetyl-L-glutamate + ATP = N-acetyl-L-glutamyl 5-phosphate + ADP</text>
        <dbReference type="Rhea" id="RHEA:14629"/>
        <dbReference type="ChEBI" id="CHEBI:30616"/>
        <dbReference type="ChEBI" id="CHEBI:44337"/>
        <dbReference type="ChEBI" id="CHEBI:57936"/>
        <dbReference type="ChEBI" id="CHEBI:456216"/>
        <dbReference type="EC" id="2.7.2.8"/>
    </reaction>
</comment>
<comment type="pathway">
    <text evidence="1">Amino-acid biosynthesis; L-arginine biosynthesis; N(2)-acetyl-L-ornithine from L-glutamate: step 2/4.</text>
</comment>
<comment type="subcellular location">
    <subcellularLocation>
        <location evidence="1">Cytoplasm</location>
    </subcellularLocation>
</comment>
<comment type="similarity">
    <text evidence="1">Belongs to the acetylglutamate kinase family. ArgB subfamily.</text>
</comment>
<feature type="chain" id="PRO_1000118333" description="Acetylglutamate kinase">
    <location>
        <begin position="1"/>
        <end position="255"/>
    </location>
</feature>
<feature type="binding site" evidence="1">
    <location>
        <begin position="40"/>
        <end position="41"/>
    </location>
    <ligand>
        <name>substrate</name>
    </ligand>
</feature>
<feature type="binding site" evidence="1">
    <location>
        <position position="62"/>
    </location>
    <ligand>
        <name>substrate</name>
    </ligand>
</feature>
<feature type="binding site" evidence="1">
    <location>
        <position position="153"/>
    </location>
    <ligand>
        <name>substrate</name>
    </ligand>
</feature>
<feature type="site" description="Transition state stabilizer" evidence="1">
    <location>
        <position position="8"/>
    </location>
</feature>
<feature type="site" description="Transition state stabilizer" evidence="1">
    <location>
        <position position="212"/>
    </location>
</feature>
<organism>
    <name type="scientific">Bacillus anthracis (strain A0248)</name>
    <dbReference type="NCBI Taxonomy" id="592021"/>
    <lineage>
        <taxon>Bacteria</taxon>
        <taxon>Bacillati</taxon>
        <taxon>Bacillota</taxon>
        <taxon>Bacilli</taxon>
        <taxon>Bacillales</taxon>
        <taxon>Bacillaceae</taxon>
        <taxon>Bacillus</taxon>
        <taxon>Bacillus cereus group</taxon>
    </lineage>
</organism>
<accession>C3P7R6</accession>
<proteinExistence type="inferred from homology"/>
<reference key="1">
    <citation type="submission" date="2009-04" db="EMBL/GenBank/DDBJ databases">
        <title>Genome sequence of Bacillus anthracis A0248.</title>
        <authorList>
            <person name="Dodson R.J."/>
            <person name="Munk A.C."/>
            <person name="Bruce D."/>
            <person name="Detter C."/>
            <person name="Tapia R."/>
            <person name="Sutton G."/>
            <person name="Sims D."/>
            <person name="Brettin T."/>
        </authorList>
    </citation>
    <scope>NUCLEOTIDE SEQUENCE [LARGE SCALE GENOMIC DNA]</scope>
    <source>
        <strain>A0248</strain>
    </source>
</reference>
<gene>
    <name evidence="1" type="primary">argB</name>
    <name type="ordered locus">BAA_4374</name>
</gene>
<sequence>MNDYIVVKCGGSMLEQLNDVFFDCIKKLQQQYKVVIVHGGGPEIDAKLKDCNINVEKRDGLRVTPKEVMDVVQMVLCGSTNKKFVMNLQKHNLLAVGCSGCDGKLLQVQPVSEEIGYVGEVSYVETALLKGLINMNYIPVIAPIGIHDNEIYNINADTAAAGIAAALSAKELILITDVDGILHEGKLVKKTDESEIATLIEKGVITGGMIPKVQAALASLKMGVQKISIVNGTKDFTEDTGECIGMTVTRGVSIV</sequence>
<keyword id="KW-0028">Amino-acid biosynthesis</keyword>
<keyword id="KW-0055">Arginine biosynthesis</keyword>
<keyword id="KW-0067">ATP-binding</keyword>
<keyword id="KW-0963">Cytoplasm</keyword>
<keyword id="KW-0418">Kinase</keyword>
<keyword id="KW-0547">Nucleotide-binding</keyword>
<keyword id="KW-0808">Transferase</keyword>
<evidence type="ECO:0000255" key="1">
    <source>
        <dbReference type="HAMAP-Rule" id="MF_00082"/>
    </source>
</evidence>
<name>ARGB_BACAA</name>
<dbReference type="EC" id="2.7.2.8" evidence="1"/>
<dbReference type="EMBL" id="CP001598">
    <property type="protein sequence ID" value="ACQ47512.1"/>
    <property type="molecule type" value="Genomic_DNA"/>
</dbReference>
<dbReference type="RefSeq" id="WP_001000908.1">
    <property type="nucleotide sequence ID" value="NC_012659.1"/>
</dbReference>
<dbReference type="SMR" id="C3P7R6"/>
<dbReference type="GeneID" id="45024018"/>
<dbReference type="KEGG" id="bai:BAA_4374"/>
<dbReference type="HOGENOM" id="CLU_053680_0_0_9"/>
<dbReference type="UniPathway" id="UPA00068">
    <property type="reaction ID" value="UER00107"/>
</dbReference>
<dbReference type="GO" id="GO:0005737">
    <property type="term" value="C:cytoplasm"/>
    <property type="evidence" value="ECO:0007669"/>
    <property type="project" value="UniProtKB-SubCell"/>
</dbReference>
<dbReference type="GO" id="GO:0003991">
    <property type="term" value="F:acetylglutamate kinase activity"/>
    <property type="evidence" value="ECO:0007669"/>
    <property type="project" value="UniProtKB-UniRule"/>
</dbReference>
<dbReference type="GO" id="GO:0005524">
    <property type="term" value="F:ATP binding"/>
    <property type="evidence" value="ECO:0007669"/>
    <property type="project" value="UniProtKB-UniRule"/>
</dbReference>
<dbReference type="GO" id="GO:0042450">
    <property type="term" value="P:arginine biosynthetic process via ornithine"/>
    <property type="evidence" value="ECO:0007669"/>
    <property type="project" value="UniProtKB-UniRule"/>
</dbReference>
<dbReference type="GO" id="GO:0006526">
    <property type="term" value="P:L-arginine biosynthetic process"/>
    <property type="evidence" value="ECO:0007669"/>
    <property type="project" value="UniProtKB-UniPathway"/>
</dbReference>
<dbReference type="CDD" id="cd04238">
    <property type="entry name" value="AAK_NAGK-like"/>
    <property type="match status" value="1"/>
</dbReference>
<dbReference type="FunFam" id="3.40.1160.10:FF:000004">
    <property type="entry name" value="Acetylglutamate kinase"/>
    <property type="match status" value="1"/>
</dbReference>
<dbReference type="Gene3D" id="3.40.1160.10">
    <property type="entry name" value="Acetylglutamate kinase-like"/>
    <property type="match status" value="1"/>
</dbReference>
<dbReference type="HAMAP" id="MF_00082">
    <property type="entry name" value="ArgB"/>
    <property type="match status" value="1"/>
</dbReference>
<dbReference type="InterPro" id="IPR036393">
    <property type="entry name" value="AceGlu_kinase-like_sf"/>
</dbReference>
<dbReference type="InterPro" id="IPR004662">
    <property type="entry name" value="AcgluKinase_fam"/>
</dbReference>
<dbReference type="InterPro" id="IPR037528">
    <property type="entry name" value="ArgB"/>
</dbReference>
<dbReference type="InterPro" id="IPR001048">
    <property type="entry name" value="Asp/Glu/Uridylate_kinase"/>
</dbReference>
<dbReference type="NCBIfam" id="TIGR00761">
    <property type="entry name" value="argB"/>
    <property type="match status" value="1"/>
</dbReference>
<dbReference type="PANTHER" id="PTHR23342">
    <property type="entry name" value="N-ACETYLGLUTAMATE SYNTHASE"/>
    <property type="match status" value="1"/>
</dbReference>
<dbReference type="PANTHER" id="PTHR23342:SF0">
    <property type="entry name" value="N-ACETYLGLUTAMATE SYNTHASE, MITOCHONDRIAL"/>
    <property type="match status" value="1"/>
</dbReference>
<dbReference type="Pfam" id="PF00696">
    <property type="entry name" value="AA_kinase"/>
    <property type="match status" value="1"/>
</dbReference>
<dbReference type="PIRSF" id="PIRSF000728">
    <property type="entry name" value="NAGK"/>
    <property type="match status" value="1"/>
</dbReference>
<dbReference type="SUPFAM" id="SSF53633">
    <property type="entry name" value="Carbamate kinase-like"/>
    <property type="match status" value="1"/>
</dbReference>